<dbReference type="EMBL" id="X98669">
    <property type="protein sequence ID" value="CAA67227.1"/>
    <property type="molecule type" value="Genomic_DNA"/>
</dbReference>
<dbReference type="EMBL" id="U89959">
    <property type="protein sequence ID" value="AAC24367.1"/>
    <property type="molecule type" value="Genomic_DNA"/>
</dbReference>
<dbReference type="EMBL" id="CP002684">
    <property type="protein sequence ID" value="AEE27369.1"/>
    <property type="molecule type" value="Genomic_DNA"/>
</dbReference>
<dbReference type="EMBL" id="AB493421">
    <property type="protein sequence ID" value="BAH30259.1"/>
    <property type="molecule type" value="mRNA"/>
</dbReference>
<dbReference type="PIR" id="T52381">
    <property type="entry name" value="T52381"/>
</dbReference>
<dbReference type="RefSeq" id="NP_171705.1">
    <property type="nucleotide sequence ID" value="NM_100083.2"/>
</dbReference>
<dbReference type="SMR" id="Q39092"/>
<dbReference type="STRING" id="3702.Q39092"/>
<dbReference type="PaxDb" id="3702-AT1G02030.1"/>
<dbReference type="EnsemblPlants" id="AT1G02030.1">
    <property type="protein sequence ID" value="AT1G02030.1"/>
    <property type="gene ID" value="AT1G02030"/>
</dbReference>
<dbReference type="GeneID" id="839285"/>
<dbReference type="Gramene" id="AT1G02030.1">
    <property type="protein sequence ID" value="AT1G02030.1"/>
    <property type="gene ID" value="AT1G02030"/>
</dbReference>
<dbReference type="KEGG" id="ath:AT1G02030"/>
<dbReference type="Araport" id="AT1G02030"/>
<dbReference type="TAIR" id="AT1G02030"/>
<dbReference type="eggNOG" id="KOG1721">
    <property type="taxonomic scope" value="Eukaryota"/>
</dbReference>
<dbReference type="HOGENOM" id="CLU_029000_0_0_1"/>
<dbReference type="InParanoid" id="Q39092"/>
<dbReference type="OMA" id="SGHECPI"/>
<dbReference type="OrthoDB" id="9411774at2759"/>
<dbReference type="PhylomeDB" id="Q39092"/>
<dbReference type="PRO" id="PR:Q39092"/>
<dbReference type="Proteomes" id="UP000006548">
    <property type="component" value="Chromosome 1"/>
</dbReference>
<dbReference type="ExpressionAtlas" id="Q39092">
    <property type="expression patterns" value="baseline and differential"/>
</dbReference>
<dbReference type="GO" id="GO:0005634">
    <property type="term" value="C:nucleus"/>
    <property type="evidence" value="ECO:0007669"/>
    <property type="project" value="UniProtKB-SubCell"/>
</dbReference>
<dbReference type="GO" id="GO:0003700">
    <property type="term" value="F:DNA-binding transcription factor activity"/>
    <property type="evidence" value="ECO:0000250"/>
    <property type="project" value="TAIR"/>
</dbReference>
<dbReference type="GO" id="GO:0008270">
    <property type="term" value="F:zinc ion binding"/>
    <property type="evidence" value="ECO:0007669"/>
    <property type="project" value="UniProtKB-KW"/>
</dbReference>
<dbReference type="GO" id="GO:0006355">
    <property type="term" value="P:regulation of DNA-templated transcription"/>
    <property type="evidence" value="ECO:0000304"/>
    <property type="project" value="TAIR"/>
</dbReference>
<dbReference type="Gene3D" id="3.30.160.60">
    <property type="entry name" value="Classic Zinc Finger"/>
    <property type="match status" value="1"/>
</dbReference>
<dbReference type="InterPro" id="IPR044303">
    <property type="entry name" value="ZAT1/4/9"/>
</dbReference>
<dbReference type="InterPro" id="IPR036236">
    <property type="entry name" value="Znf_C2H2_sf"/>
</dbReference>
<dbReference type="InterPro" id="IPR013087">
    <property type="entry name" value="Znf_C2H2_type"/>
</dbReference>
<dbReference type="PANTHER" id="PTHR46326">
    <property type="entry name" value="ZINC FINGER PROTEIN ZAT1-RELATED"/>
    <property type="match status" value="1"/>
</dbReference>
<dbReference type="PANTHER" id="PTHR46326:SF2">
    <property type="entry name" value="ZINC FINGER PROTEIN ZAT1-RELATED"/>
    <property type="match status" value="1"/>
</dbReference>
<dbReference type="Pfam" id="PF13912">
    <property type="entry name" value="zf-C2H2_6"/>
    <property type="match status" value="3"/>
</dbReference>
<dbReference type="SMART" id="SM00355">
    <property type="entry name" value="ZnF_C2H2"/>
    <property type="match status" value="3"/>
</dbReference>
<dbReference type="SUPFAM" id="SSF57667">
    <property type="entry name" value="beta-beta-alpha zinc fingers"/>
    <property type="match status" value="2"/>
</dbReference>
<dbReference type="PROSITE" id="PS00028">
    <property type="entry name" value="ZINC_FINGER_C2H2_1"/>
    <property type="match status" value="3"/>
</dbReference>
<dbReference type="PROSITE" id="PS50157">
    <property type="entry name" value="ZINC_FINGER_C2H2_2"/>
    <property type="match status" value="3"/>
</dbReference>
<proteinExistence type="evidence at transcript level"/>
<evidence type="ECO:0000250" key="1"/>
<evidence type="ECO:0000255" key="2">
    <source>
        <dbReference type="PROSITE-ProRule" id="PRU00042"/>
    </source>
</evidence>
<evidence type="ECO:0000256" key="3">
    <source>
        <dbReference type="SAM" id="MobiDB-lite"/>
    </source>
</evidence>
<evidence type="ECO:0000305" key="4"/>
<reference key="1">
    <citation type="journal article" date="1997" name="Plant Mol. Biol.">
        <title>Isolation and characterisation of a diverse family of Arabidopsis two and three-fingered protein genes and cDNA's.</title>
        <authorList>
            <person name="Meissner R."/>
            <person name="Michael A.J."/>
        </authorList>
    </citation>
    <scope>NUCLEOTIDE SEQUENCE [GENOMIC DNA]</scope>
    <source>
        <strain>cv. Columbia</strain>
    </source>
</reference>
<reference key="2">
    <citation type="journal article" date="2000" name="Nature">
        <title>Sequence and analysis of chromosome 1 of the plant Arabidopsis thaliana.</title>
        <authorList>
            <person name="Theologis A."/>
            <person name="Ecker J.R."/>
            <person name="Palm C.J."/>
            <person name="Federspiel N.A."/>
            <person name="Kaul S."/>
            <person name="White O."/>
            <person name="Alonso J."/>
            <person name="Altafi H."/>
            <person name="Araujo R."/>
            <person name="Bowman C.L."/>
            <person name="Brooks S.Y."/>
            <person name="Buehler E."/>
            <person name="Chan A."/>
            <person name="Chao Q."/>
            <person name="Chen H."/>
            <person name="Cheuk R.F."/>
            <person name="Chin C.W."/>
            <person name="Chung M.K."/>
            <person name="Conn L."/>
            <person name="Conway A.B."/>
            <person name="Conway A.R."/>
            <person name="Creasy T.H."/>
            <person name="Dewar K."/>
            <person name="Dunn P."/>
            <person name="Etgu P."/>
            <person name="Feldblyum T.V."/>
            <person name="Feng J.-D."/>
            <person name="Fong B."/>
            <person name="Fujii C.Y."/>
            <person name="Gill J.E."/>
            <person name="Goldsmith A.D."/>
            <person name="Haas B."/>
            <person name="Hansen N.F."/>
            <person name="Hughes B."/>
            <person name="Huizar L."/>
            <person name="Hunter J.L."/>
            <person name="Jenkins J."/>
            <person name="Johnson-Hopson C."/>
            <person name="Khan S."/>
            <person name="Khaykin E."/>
            <person name="Kim C.J."/>
            <person name="Koo H.L."/>
            <person name="Kremenetskaia I."/>
            <person name="Kurtz D.B."/>
            <person name="Kwan A."/>
            <person name="Lam B."/>
            <person name="Langin-Hooper S."/>
            <person name="Lee A."/>
            <person name="Lee J.M."/>
            <person name="Lenz C.A."/>
            <person name="Li J.H."/>
            <person name="Li Y.-P."/>
            <person name="Lin X."/>
            <person name="Liu S.X."/>
            <person name="Liu Z.A."/>
            <person name="Luros J.S."/>
            <person name="Maiti R."/>
            <person name="Marziali A."/>
            <person name="Militscher J."/>
            <person name="Miranda M."/>
            <person name="Nguyen M."/>
            <person name="Nierman W.C."/>
            <person name="Osborne B.I."/>
            <person name="Pai G."/>
            <person name="Peterson J."/>
            <person name="Pham P.K."/>
            <person name="Rizzo M."/>
            <person name="Rooney T."/>
            <person name="Rowley D."/>
            <person name="Sakano H."/>
            <person name="Salzberg S.L."/>
            <person name="Schwartz J.R."/>
            <person name="Shinn P."/>
            <person name="Southwick A.M."/>
            <person name="Sun H."/>
            <person name="Tallon L.J."/>
            <person name="Tambunga G."/>
            <person name="Toriumi M.J."/>
            <person name="Town C.D."/>
            <person name="Utterback T."/>
            <person name="Van Aken S."/>
            <person name="Vaysberg M."/>
            <person name="Vysotskaia V.S."/>
            <person name="Walker M."/>
            <person name="Wu D."/>
            <person name="Yu G."/>
            <person name="Fraser C.M."/>
            <person name="Venter J.C."/>
            <person name="Davis R.W."/>
        </authorList>
    </citation>
    <scope>NUCLEOTIDE SEQUENCE [LARGE SCALE GENOMIC DNA]</scope>
    <source>
        <strain>cv. Columbia</strain>
    </source>
</reference>
<reference key="3">
    <citation type="journal article" date="2017" name="Plant J.">
        <title>Araport11: a complete reannotation of the Arabidopsis thaliana reference genome.</title>
        <authorList>
            <person name="Cheng C.Y."/>
            <person name="Krishnakumar V."/>
            <person name="Chan A.P."/>
            <person name="Thibaud-Nissen F."/>
            <person name="Schobel S."/>
            <person name="Town C.D."/>
        </authorList>
    </citation>
    <scope>GENOME REANNOTATION</scope>
    <source>
        <strain>cv. Columbia</strain>
    </source>
</reference>
<reference key="4">
    <citation type="submission" date="2009-03" db="EMBL/GenBank/DDBJ databases">
        <title>ORF cloning and analysis of Arabidopsis transcription factor genes.</title>
        <authorList>
            <person name="Fujita M."/>
            <person name="Mizukado S."/>
            <person name="Seki M."/>
            <person name="Shinozaki K."/>
            <person name="Mitsuda N."/>
            <person name="Takiguchi Y."/>
            <person name="Takagi M."/>
        </authorList>
    </citation>
    <scope>NUCLEOTIDE SEQUENCE [LARGE SCALE MRNA]</scope>
</reference>
<gene>
    <name type="primary">ZAT1</name>
    <name type="ordered locus">At1g02030</name>
    <name type="ORF">T7I23.3</name>
</gene>
<keyword id="KW-0479">Metal-binding</keyword>
<keyword id="KW-0539">Nucleus</keyword>
<keyword id="KW-1185">Reference proteome</keyword>
<keyword id="KW-0677">Repeat</keyword>
<keyword id="KW-0804">Transcription</keyword>
<keyword id="KW-0805">Transcription regulation</keyword>
<keyword id="KW-0862">Zinc</keyword>
<keyword id="KW-0863">Zinc-finger</keyword>
<feature type="chain" id="PRO_0000409710" description="Zinc finger protein ZAT1">
    <location>
        <begin position="1"/>
        <end position="267"/>
    </location>
</feature>
<feature type="zinc finger region" description="C2H2-type 1" evidence="2">
    <location>
        <begin position="5"/>
        <end position="27"/>
    </location>
</feature>
<feature type="zinc finger region" description="C2H2-type 2" evidence="2">
    <location>
        <begin position="160"/>
        <end position="182"/>
    </location>
</feature>
<feature type="zinc finger region" description="C2H2-type 3" evidence="2">
    <location>
        <begin position="209"/>
        <end position="231"/>
    </location>
</feature>
<feature type="region of interest" description="Disordered" evidence="3">
    <location>
        <begin position="34"/>
        <end position="99"/>
    </location>
</feature>
<feature type="region of interest" description="Disordered" evidence="3">
    <location>
        <begin position="181"/>
        <end position="204"/>
    </location>
</feature>
<feature type="compositionally biased region" description="Basic and acidic residues" evidence="3">
    <location>
        <begin position="52"/>
        <end position="62"/>
    </location>
</feature>
<feature type="compositionally biased region" description="Basic residues" evidence="3">
    <location>
        <begin position="63"/>
        <end position="73"/>
    </location>
</feature>
<feature type="compositionally biased region" description="Basic and acidic residues" evidence="3">
    <location>
        <begin position="83"/>
        <end position="97"/>
    </location>
</feature>
<sequence>MEERHKCKLCWKSFANGRALGGHMRSHMLIHPLPSQPESYSSSMADPGFVLQDRESETESSKKPSRKRSRLNRRSISSLRHQQSNEEGKSETARAADIKIGVQELSESCTEQEPMSSVSDAATTEEDVALSLMLLSRDKWEKEEEESDEERWKKKRNKWFECETCEKVFKSYQALGGHRASHKKKIAETDQLGSDELKKKKKKSTSSHHECPICAKVFTSGQALGGHKRSHASANNEFTRRSGIIISLIDLNLPAPSEEEEMASSVF</sequence>
<organism>
    <name type="scientific">Arabidopsis thaliana</name>
    <name type="common">Mouse-ear cress</name>
    <dbReference type="NCBI Taxonomy" id="3702"/>
    <lineage>
        <taxon>Eukaryota</taxon>
        <taxon>Viridiplantae</taxon>
        <taxon>Streptophyta</taxon>
        <taxon>Embryophyta</taxon>
        <taxon>Tracheophyta</taxon>
        <taxon>Spermatophyta</taxon>
        <taxon>Magnoliopsida</taxon>
        <taxon>eudicotyledons</taxon>
        <taxon>Gunneridae</taxon>
        <taxon>Pentapetalae</taxon>
        <taxon>rosids</taxon>
        <taxon>malvids</taxon>
        <taxon>Brassicales</taxon>
        <taxon>Brassicaceae</taxon>
        <taxon>Camelineae</taxon>
        <taxon>Arabidopsis</taxon>
    </lineage>
</organism>
<name>ZAT1_ARATH</name>
<protein>
    <recommendedName>
        <fullName>Zinc finger protein ZAT1</fullName>
    </recommendedName>
</protein>
<comment type="function">
    <text evidence="1">Probable transcription factor that may be involved in stress responses.</text>
</comment>
<comment type="subcellular location">
    <subcellularLocation>
        <location evidence="4">Nucleus</location>
    </subcellularLocation>
</comment>
<accession>Q39092</accession>